<organism>
    <name type="scientific">Acidiphilium cryptum (strain JF-5)</name>
    <dbReference type="NCBI Taxonomy" id="349163"/>
    <lineage>
        <taxon>Bacteria</taxon>
        <taxon>Pseudomonadati</taxon>
        <taxon>Pseudomonadota</taxon>
        <taxon>Alphaproteobacteria</taxon>
        <taxon>Acetobacterales</taxon>
        <taxon>Acidocellaceae</taxon>
        <taxon>Acidiphilium</taxon>
    </lineage>
</organism>
<dbReference type="EMBL" id="CP000697">
    <property type="protein sequence ID" value="ABQ30885.1"/>
    <property type="molecule type" value="Genomic_DNA"/>
</dbReference>
<dbReference type="RefSeq" id="WP_007423084.1">
    <property type="nucleotide sequence ID" value="NC_009484.1"/>
</dbReference>
<dbReference type="SMR" id="A5FZ53"/>
<dbReference type="STRING" id="349163.Acry_1680"/>
<dbReference type="KEGG" id="acr:Acry_1680"/>
<dbReference type="eggNOG" id="COG0224">
    <property type="taxonomic scope" value="Bacteria"/>
</dbReference>
<dbReference type="HOGENOM" id="CLU_050669_0_1_5"/>
<dbReference type="Proteomes" id="UP000000245">
    <property type="component" value="Chromosome"/>
</dbReference>
<dbReference type="GO" id="GO:0005886">
    <property type="term" value="C:plasma membrane"/>
    <property type="evidence" value="ECO:0007669"/>
    <property type="project" value="UniProtKB-SubCell"/>
</dbReference>
<dbReference type="GO" id="GO:0045259">
    <property type="term" value="C:proton-transporting ATP synthase complex"/>
    <property type="evidence" value="ECO:0007669"/>
    <property type="project" value="UniProtKB-KW"/>
</dbReference>
<dbReference type="GO" id="GO:0005524">
    <property type="term" value="F:ATP binding"/>
    <property type="evidence" value="ECO:0007669"/>
    <property type="project" value="UniProtKB-UniRule"/>
</dbReference>
<dbReference type="GO" id="GO:0046933">
    <property type="term" value="F:proton-transporting ATP synthase activity, rotational mechanism"/>
    <property type="evidence" value="ECO:0007669"/>
    <property type="project" value="UniProtKB-UniRule"/>
</dbReference>
<dbReference type="GO" id="GO:0042777">
    <property type="term" value="P:proton motive force-driven plasma membrane ATP synthesis"/>
    <property type="evidence" value="ECO:0007669"/>
    <property type="project" value="UniProtKB-UniRule"/>
</dbReference>
<dbReference type="CDD" id="cd12151">
    <property type="entry name" value="F1-ATPase_gamma"/>
    <property type="match status" value="1"/>
</dbReference>
<dbReference type="FunFam" id="1.10.287.80:FF:000001">
    <property type="entry name" value="ATP synthase gamma chain"/>
    <property type="match status" value="1"/>
</dbReference>
<dbReference type="Gene3D" id="3.40.1380.10">
    <property type="match status" value="1"/>
</dbReference>
<dbReference type="Gene3D" id="1.10.287.80">
    <property type="entry name" value="ATP synthase, gamma subunit, helix hairpin domain"/>
    <property type="match status" value="1"/>
</dbReference>
<dbReference type="HAMAP" id="MF_00815">
    <property type="entry name" value="ATP_synth_gamma_bact"/>
    <property type="match status" value="1"/>
</dbReference>
<dbReference type="InterPro" id="IPR035968">
    <property type="entry name" value="ATP_synth_F1_ATPase_gsu"/>
</dbReference>
<dbReference type="InterPro" id="IPR000131">
    <property type="entry name" value="ATP_synth_F1_gsu"/>
</dbReference>
<dbReference type="InterPro" id="IPR023632">
    <property type="entry name" value="ATP_synth_F1_gsu_CS"/>
</dbReference>
<dbReference type="NCBIfam" id="TIGR01146">
    <property type="entry name" value="ATPsyn_F1gamma"/>
    <property type="match status" value="1"/>
</dbReference>
<dbReference type="NCBIfam" id="NF004146">
    <property type="entry name" value="PRK05621.1-4"/>
    <property type="match status" value="1"/>
</dbReference>
<dbReference type="PANTHER" id="PTHR11693">
    <property type="entry name" value="ATP SYNTHASE GAMMA CHAIN"/>
    <property type="match status" value="1"/>
</dbReference>
<dbReference type="PANTHER" id="PTHR11693:SF22">
    <property type="entry name" value="ATP SYNTHASE SUBUNIT GAMMA, MITOCHONDRIAL"/>
    <property type="match status" value="1"/>
</dbReference>
<dbReference type="Pfam" id="PF00231">
    <property type="entry name" value="ATP-synt"/>
    <property type="match status" value="1"/>
</dbReference>
<dbReference type="PIRSF" id="PIRSF039089">
    <property type="entry name" value="ATP_synthase_gamma"/>
    <property type="match status" value="1"/>
</dbReference>
<dbReference type="PRINTS" id="PR00126">
    <property type="entry name" value="ATPASEGAMMA"/>
</dbReference>
<dbReference type="SUPFAM" id="SSF52943">
    <property type="entry name" value="ATP synthase (F1-ATPase), gamma subunit"/>
    <property type="match status" value="1"/>
</dbReference>
<dbReference type="PROSITE" id="PS00153">
    <property type="entry name" value="ATPASE_GAMMA"/>
    <property type="match status" value="1"/>
</dbReference>
<keyword id="KW-0066">ATP synthesis</keyword>
<keyword id="KW-0997">Cell inner membrane</keyword>
<keyword id="KW-1003">Cell membrane</keyword>
<keyword id="KW-0139">CF(1)</keyword>
<keyword id="KW-0375">Hydrogen ion transport</keyword>
<keyword id="KW-0406">Ion transport</keyword>
<keyword id="KW-0472">Membrane</keyword>
<keyword id="KW-1185">Reference proteome</keyword>
<keyword id="KW-0813">Transport</keyword>
<proteinExistence type="inferred from homology"/>
<feature type="chain" id="PRO_1000053144" description="ATP synthase gamma chain">
    <location>
        <begin position="1"/>
        <end position="296"/>
    </location>
</feature>
<feature type="region of interest" description="Disordered" evidence="2">
    <location>
        <begin position="194"/>
        <end position="216"/>
    </location>
</feature>
<reference key="1">
    <citation type="submission" date="2007-05" db="EMBL/GenBank/DDBJ databases">
        <title>Complete sequence of chromosome of Acidiphilium cryptum JF-5.</title>
        <authorList>
            <consortium name="US DOE Joint Genome Institute"/>
            <person name="Copeland A."/>
            <person name="Lucas S."/>
            <person name="Lapidus A."/>
            <person name="Barry K."/>
            <person name="Detter J.C."/>
            <person name="Glavina del Rio T."/>
            <person name="Hammon N."/>
            <person name="Israni S."/>
            <person name="Dalin E."/>
            <person name="Tice H."/>
            <person name="Pitluck S."/>
            <person name="Sims D."/>
            <person name="Brettin T."/>
            <person name="Bruce D."/>
            <person name="Han C."/>
            <person name="Schmutz J."/>
            <person name="Larimer F."/>
            <person name="Land M."/>
            <person name="Hauser L."/>
            <person name="Kyrpides N."/>
            <person name="Kim E."/>
            <person name="Magnuson T."/>
            <person name="Richardson P."/>
        </authorList>
    </citation>
    <scope>NUCLEOTIDE SEQUENCE [LARGE SCALE GENOMIC DNA]</scope>
    <source>
        <strain>JF-5</strain>
    </source>
</reference>
<comment type="function">
    <text evidence="1">Produces ATP from ADP in the presence of a proton gradient across the membrane. The gamma chain is believed to be important in regulating ATPase activity and the flow of protons through the CF(0) complex.</text>
</comment>
<comment type="subunit">
    <text evidence="1">F-type ATPases have 2 components, CF(1) - the catalytic core - and CF(0) - the membrane proton channel. CF(1) has five subunits: alpha(3), beta(3), gamma(1), delta(1), epsilon(1). CF(0) has three main subunits: a, b and c.</text>
</comment>
<comment type="subcellular location">
    <subcellularLocation>
        <location evidence="1">Cell inner membrane</location>
        <topology evidence="1">Peripheral membrane protein</topology>
    </subcellularLocation>
</comment>
<comment type="similarity">
    <text evidence="1">Belongs to the ATPase gamma chain family.</text>
</comment>
<evidence type="ECO:0000255" key="1">
    <source>
        <dbReference type="HAMAP-Rule" id="MF_00815"/>
    </source>
</evidence>
<evidence type="ECO:0000256" key="2">
    <source>
        <dbReference type="SAM" id="MobiDB-lite"/>
    </source>
</evidence>
<name>ATPG_ACICJ</name>
<sequence length="296" mass="31850">MASLKALRNRIASVKSTQKITKAMKMVAAAKLRRAQAQAEAARPYATRMAAMMGALAEGAAENPNAPALLVGNGADRTHLIVVVSADRGLAGPFNASINRAARARARKLEAEGKQVRLFTVGRKGRDFFRRDMREKIIGEANFVGKKTIEFADAEAIANQIIAAFNDGKFDVCTLMFNRFVSVMSQVPSETPLIPASAGQAANDNAGSDQPAGDYEIEPDDGTLLDRLLPRNLAVQIYSALLESAAGEQGARMTAMDNATRNAGEMINRLTLNYNRTRQANITKELIEIISGAEAL</sequence>
<accession>A5FZ53</accession>
<protein>
    <recommendedName>
        <fullName evidence="1">ATP synthase gamma chain</fullName>
    </recommendedName>
    <alternativeName>
        <fullName evidence="1">ATP synthase F1 sector gamma subunit</fullName>
    </alternativeName>
    <alternativeName>
        <fullName evidence="1">F-ATPase gamma subunit</fullName>
    </alternativeName>
</protein>
<gene>
    <name evidence="1" type="primary">atpG</name>
    <name type="ordered locus">Acry_1680</name>
</gene>